<gene>
    <name type="primary">aaxC</name>
    <name type="synonym">arcD</name>
    <name type="ordered locus">CTLon_0626</name>
</gene>
<proteinExistence type="inferred from homology"/>
<name>AAXC_CHLTB</name>
<protein>
    <recommendedName>
        <fullName>Arginine/agmatine antiporter</fullName>
    </recommendedName>
</protein>
<reference key="1">
    <citation type="journal article" date="2008" name="Genome Res.">
        <title>Chlamydia trachomatis: genome sequence analysis of lymphogranuloma venereum isolates.</title>
        <authorList>
            <person name="Thomson N.R."/>
            <person name="Holden M.T.G."/>
            <person name="Carder C."/>
            <person name="Lennard N."/>
            <person name="Lockey S.J."/>
            <person name="Marsh P."/>
            <person name="Skipp P."/>
            <person name="O'Connor C.D."/>
            <person name="Goodhead I."/>
            <person name="Norbertzcak H."/>
            <person name="Harris B."/>
            <person name="Ormond D."/>
            <person name="Rance R."/>
            <person name="Quail M.A."/>
            <person name="Parkhill J."/>
            <person name="Stephens R.S."/>
            <person name="Clarke I.N."/>
        </authorList>
    </citation>
    <scope>NUCLEOTIDE SEQUENCE [LARGE SCALE GENOMIC DNA]</scope>
    <source>
        <strain>UCH-1/proctitis</strain>
    </source>
</reference>
<organism>
    <name type="scientific">Chlamydia trachomatis serovar L2b (strain UCH-1/proctitis)</name>
    <dbReference type="NCBI Taxonomy" id="471473"/>
    <lineage>
        <taxon>Bacteria</taxon>
        <taxon>Pseudomonadati</taxon>
        <taxon>Chlamydiota</taxon>
        <taxon>Chlamydiia</taxon>
        <taxon>Chlamydiales</taxon>
        <taxon>Chlamydiaceae</taxon>
        <taxon>Chlamydia/Chlamydophila group</taxon>
        <taxon>Chlamydia</taxon>
    </lineage>
</organism>
<sequence length="483" mass="52662">MLLKKRSPTSILGTLALTGIVISYMIGGGIFSLPQNMAASASAGAVMLAWMLSGIGIFFIANTFKTLSIIRPDLKAGIYTYSREGFGPYVGFTIAWGYWLCQIFGNVGYAVITMDALNYFFPPYFAGGNTIPAILLGSLLIWIFNYIVLRGIRQASFVNIIGVVCTLIPLLLFILITARFFKFSIFKTDFWGTAPQHTLGSIGSQLKSTMLVTLWAFIGIEGAVVISGRAANPSSVGKATILGFSGCLLIYVLLSLLPFGSLFQYQLAKIADPSTAGVLNILVGKWGEVLMNTGLLIAVLTSWLSWTILASEIPYAAAKNGTFPECFAIENSKHAPSFSLFMTSGLMQITMLLVYFSSNAWNTMLEITGVMVLPAYLTSSLFLVKFSLSKKYPKQAAIKARIAMITGLLGSLYSLWLIYAGGLQHLFMVAILLALGIPFYVDSGIRHKQEKTFLNRKEILKMTIMALAALLAIFLFSANKIHL</sequence>
<feature type="chain" id="PRO_5000301184" description="Arginine/agmatine antiporter">
    <location>
        <begin position="1"/>
        <end position="483"/>
    </location>
</feature>
<feature type="transmembrane region" description="Helical" evidence="2">
    <location>
        <begin position="11"/>
        <end position="33"/>
    </location>
</feature>
<feature type="transmembrane region" description="Helical" evidence="2">
    <location>
        <begin position="48"/>
        <end position="70"/>
    </location>
</feature>
<feature type="transmembrane region" description="Helical" evidence="2">
    <location>
        <begin position="90"/>
        <end position="112"/>
    </location>
</feature>
<feature type="transmembrane region" description="Helical" evidence="2">
    <location>
        <begin position="127"/>
        <end position="149"/>
    </location>
</feature>
<feature type="transmembrane region" description="Helical" evidence="2">
    <location>
        <begin position="156"/>
        <end position="178"/>
    </location>
</feature>
<feature type="transmembrane region" description="Helical" evidence="2">
    <location>
        <begin position="209"/>
        <end position="228"/>
    </location>
</feature>
<feature type="transmembrane region" description="Helical" evidence="2">
    <location>
        <begin position="241"/>
        <end position="263"/>
    </location>
</feature>
<feature type="transmembrane region" description="Helical" evidence="2">
    <location>
        <begin position="293"/>
        <end position="315"/>
    </location>
</feature>
<feature type="transmembrane region" description="Helical" evidence="2">
    <location>
        <begin position="335"/>
        <end position="357"/>
    </location>
</feature>
<feature type="transmembrane region" description="Helical" evidence="2">
    <location>
        <begin position="367"/>
        <end position="389"/>
    </location>
</feature>
<feature type="transmembrane region" description="Helical" evidence="2">
    <location>
        <begin position="415"/>
        <end position="435"/>
    </location>
</feature>
<feature type="transmembrane region" description="Helical" evidence="2">
    <location>
        <begin position="458"/>
        <end position="477"/>
    </location>
</feature>
<comment type="function">
    <text evidence="1">Catalyzes the exchange of L-arginine for agmatine. The arginine uptake by the bacterium in the macrophage may be a virulence factor against the host innate immune response (By similarity).</text>
</comment>
<comment type="subcellular location">
    <subcellularLocation>
        <location evidence="1">Cell inner membrane</location>
        <topology evidence="1">Multi-pass membrane protein</topology>
    </subcellularLocation>
</comment>
<comment type="similarity">
    <text evidence="3">Belongs to the amino acid-polyamine-organocation (APC) superfamily. Basic amino acid/polyamine antiporter (APA) (TC 2.A.3.2) family.</text>
</comment>
<dbReference type="EMBL" id="AM884177">
    <property type="protein sequence ID" value="CAP07023.1"/>
    <property type="molecule type" value="Genomic_DNA"/>
</dbReference>
<dbReference type="RefSeq" id="WP_009873766.1">
    <property type="nucleotide sequence ID" value="NC_010280.2"/>
</dbReference>
<dbReference type="SMR" id="B0BC08"/>
<dbReference type="KEGG" id="ctl:CTLon_0626"/>
<dbReference type="HOGENOM" id="CLU_007946_1_2_0"/>
<dbReference type="Proteomes" id="UP001154401">
    <property type="component" value="Chromosome"/>
</dbReference>
<dbReference type="GO" id="GO:0005886">
    <property type="term" value="C:plasma membrane"/>
    <property type="evidence" value="ECO:0007669"/>
    <property type="project" value="UniProtKB-SubCell"/>
</dbReference>
<dbReference type="GO" id="GO:0015297">
    <property type="term" value="F:antiporter activity"/>
    <property type="evidence" value="ECO:0007669"/>
    <property type="project" value="UniProtKB-KW"/>
</dbReference>
<dbReference type="GO" id="GO:0006865">
    <property type="term" value="P:amino acid transport"/>
    <property type="evidence" value="ECO:0007669"/>
    <property type="project" value="UniProtKB-KW"/>
</dbReference>
<dbReference type="Gene3D" id="1.20.1740.10">
    <property type="entry name" value="Amino acid/polyamine transporter I"/>
    <property type="match status" value="1"/>
</dbReference>
<dbReference type="InterPro" id="IPR002293">
    <property type="entry name" value="AA/rel_permease1"/>
</dbReference>
<dbReference type="InterPro" id="IPR004754">
    <property type="entry name" value="Amino_acid_antiprt"/>
</dbReference>
<dbReference type="InterPro" id="IPR050367">
    <property type="entry name" value="APC_superfamily"/>
</dbReference>
<dbReference type="NCBIfam" id="TIGR00905">
    <property type="entry name" value="2A0302"/>
    <property type="match status" value="1"/>
</dbReference>
<dbReference type="PANTHER" id="PTHR42770">
    <property type="entry name" value="AMINO ACID TRANSPORTER-RELATED"/>
    <property type="match status" value="1"/>
</dbReference>
<dbReference type="PANTHER" id="PTHR42770:SF4">
    <property type="entry name" value="ARGININE_ORNITHINE ANTIPORTER-RELATED"/>
    <property type="match status" value="1"/>
</dbReference>
<dbReference type="Pfam" id="PF13520">
    <property type="entry name" value="AA_permease_2"/>
    <property type="match status" value="1"/>
</dbReference>
<dbReference type="PIRSF" id="PIRSF006060">
    <property type="entry name" value="AA_transporter"/>
    <property type="match status" value="1"/>
</dbReference>
<keyword id="KW-0029">Amino-acid transport</keyword>
<keyword id="KW-0050">Antiport</keyword>
<keyword id="KW-0997">Cell inner membrane</keyword>
<keyword id="KW-1003">Cell membrane</keyword>
<keyword id="KW-0472">Membrane</keyword>
<keyword id="KW-0812">Transmembrane</keyword>
<keyword id="KW-1133">Transmembrane helix</keyword>
<keyword id="KW-0813">Transport</keyword>
<keyword id="KW-0843">Virulence</keyword>
<accession>B0BC08</accession>
<evidence type="ECO:0000250" key="1"/>
<evidence type="ECO:0000255" key="2"/>
<evidence type="ECO:0000305" key="3"/>